<accession>A4TSJ2</accession>
<comment type="function">
    <text evidence="1">Produces ATP from ADP in the presence of a proton gradient across the membrane. The gamma chain is believed to be important in regulating ATPase activity and the flow of protons through the CF(0) complex.</text>
</comment>
<comment type="subunit">
    <text evidence="1">F-type ATPases have 2 components, CF(1) - the catalytic core - and CF(0) - the membrane proton channel. CF(1) has five subunits: alpha(3), beta(3), gamma(1), delta(1), epsilon(1). CF(0) has three main subunits: a, b and c.</text>
</comment>
<comment type="subcellular location">
    <subcellularLocation>
        <location evidence="1">Cell inner membrane</location>
        <topology evidence="1">Peripheral membrane protein</topology>
    </subcellularLocation>
</comment>
<comment type="similarity">
    <text evidence="1">Belongs to the ATPase gamma chain family.</text>
</comment>
<proteinExistence type="inferred from homology"/>
<sequence length="287" mass="31578">MAGAKEIRSKIASVQNTQKITKAMEMVAASKMRKSQERMAASRPYAETMRSVIGHLALGNLEYKHPYLEERDVKRVGYLVVSTDRGLCGGLNINLFKRLLAEMKGWSEKGVECDLALIGSKAASFFGSVGGKIVAQVTGMGDNPSLSELIGPVKVMLQAYDEGRLDKLYIVNNKFINTMSQEPRIMQLLPLPPAEDGELKKKSWDYLYEPDPKALLDTLLRRYVESQVYQGVVENLASEQAARMVAMKAATDNGGSLIKELQLVYNKARQASITQELTEIVGGASAV</sequence>
<organism>
    <name type="scientific">Yersinia pestis (strain Pestoides F)</name>
    <dbReference type="NCBI Taxonomy" id="386656"/>
    <lineage>
        <taxon>Bacteria</taxon>
        <taxon>Pseudomonadati</taxon>
        <taxon>Pseudomonadota</taxon>
        <taxon>Gammaproteobacteria</taxon>
        <taxon>Enterobacterales</taxon>
        <taxon>Yersiniaceae</taxon>
        <taxon>Yersinia</taxon>
    </lineage>
</organism>
<feature type="chain" id="PRO_1000053380" description="ATP synthase gamma chain">
    <location>
        <begin position="1"/>
        <end position="287"/>
    </location>
</feature>
<evidence type="ECO:0000255" key="1">
    <source>
        <dbReference type="HAMAP-Rule" id="MF_00815"/>
    </source>
</evidence>
<reference key="1">
    <citation type="submission" date="2007-02" db="EMBL/GenBank/DDBJ databases">
        <title>Complete sequence of chromosome of Yersinia pestis Pestoides F.</title>
        <authorList>
            <consortium name="US DOE Joint Genome Institute"/>
            <person name="Copeland A."/>
            <person name="Lucas S."/>
            <person name="Lapidus A."/>
            <person name="Barry K."/>
            <person name="Detter J.C."/>
            <person name="Glavina del Rio T."/>
            <person name="Hammon N."/>
            <person name="Israni S."/>
            <person name="Dalin E."/>
            <person name="Tice H."/>
            <person name="Pitluck S."/>
            <person name="Di Bartolo G."/>
            <person name="Chain P."/>
            <person name="Malfatti S."/>
            <person name="Shin M."/>
            <person name="Vergez L."/>
            <person name="Schmutz J."/>
            <person name="Larimer F."/>
            <person name="Land M."/>
            <person name="Hauser L."/>
            <person name="Worsham P."/>
            <person name="Chu M."/>
            <person name="Bearden S."/>
            <person name="Garcia E."/>
            <person name="Richardson P."/>
        </authorList>
    </citation>
    <scope>NUCLEOTIDE SEQUENCE [LARGE SCALE GENOMIC DNA]</scope>
    <source>
        <strain>Pestoides F</strain>
    </source>
</reference>
<dbReference type="EMBL" id="CP000668">
    <property type="protein sequence ID" value="ABP42254.1"/>
    <property type="molecule type" value="Genomic_DNA"/>
</dbReference>
<dbReference type="RefSeq" id="WP_002220756.1">
    <property type="nucleotide sequence ID" value="NZ_CP009715.1"/>
</dbReference>
<dbReference type="SMR" id="A4TSJ2"/>
<dbReference type="GeneID" id="96663460"/>
<dbReference type="KEGG" id="ypp:YPDSF_3913"/>
<dbReference type="PATRIC" id="fig|386656.14.peg.604"/>
<dbReference type="GO" id="GO:0005886">
    <property type="term" value="C:plasma membrane"/>
    <property type="evidence" value="ECO:0007669"/>
    <property type="project" value="UniProtKB-SubCell"/>
</dbReference>
<dbReference type="GO" id="GO:0045259">
    <property type="term" value="C:proton-transporting ATP synthase complex"/>
    <property type="evidence" value="ECO:0007669"/>
    <property type="project" value="UniProtKB-KW"/>
</dbReference>
<dbReference type="GO" id="GO:0005524">
    <property type="term" value="F:ATP binding"/>
    <property type="evidence" value="ECO:0007669"/>
    <property type="project" value="UniProtKB-UniRule"/>
</dbReference>
<dbReference type="GO" id="GO:0046933">
    <property type="term" value="F:proton-transporting ATP synthase activity, rotational mechanism"/>
    <property type="evidence" value="ECO:0007669"/>
    <property type="project" value="UniProtKB-UniRule"/>
</dbReference>
<dbReference type="GO" id="GO:0042777">
    <property type="term" value="P:proton motive force-driven plasma membrane ATP synthesis"/>
    <property type="evidence" value="ECO:0007669"/>
    <property type="project" value="UniProtKB-UniRule"/>
</dbReference>
<dbReference type="CDD" id="cd12151">
    <property type="entry name" value="F1-ATPase_gamma"/>
    <property type="match status" value="1"/>
</dbReference>
<dbReference type="FunFam" id="1.10.287.80:FF:000005">
    <property type="entry name" value="ATP synthase gamma chain"/>
    <property type="match status" value="2"/>
</dbReference>
<dbReference type="FunFam" id="3.40.1380.10:FF:000001">
    <property type="entry name" value="ATP synthase gamma chain"/>
    <property type="match status" value="1"/>
</dbReference>
<dbReference type="Gene3D" id="3.40.1380.10">
    <property type="match status" value="1"/>
</dbReference>
<dbReference type="Gene3D" id="1.10.287.80">
    <property type="entry name" value="ATP synthase, gamma subunit, helix hairpin domain"/>
    <property type="match status" value="1"/>
</dbReference>
<dbReference type="HAMAP" id="MF_00815">
    <property type="entry name" value="ATP_synth_gamma_bact"/>
    <property type="match status" value="1"/>
</dbReference>
<dbReference type="InterPro" id="IPR035968">
    <property type="entry name" value="ATP_synth_F1_ATPase_gsu"/>
</dbReference>
<dbReference type="InterPro" id="IPR000131">
    <property type="entry name" value="ATP_synth_F1_gsu"/>
</dbReference>
<dbReference type="InterPro" id="IPR023632">
    <property type="entry name" value="ATP_synth_F1_gsu_CS"/>
</dbReference>
<dbReference type="NCBIfam" id="TIGR01146">
    <property type="entry name" value="ATPsyn_F1gamma"/>
    <property type="match status" value="1"/>
</dbReference>
<dbReference type="NCBIfam" id="NF004144">
    <property type="entry name" value="PRK05621.1-1"/>
    <property type="match status" value="1"/>
</dbReference>
<dbReference type="PANTHER" id="PTHR11693">
    <property type="entry name" value="ATP SYNTHASE GAMMA CHAIN"/>
    <property type="match status" value="1"/>
</dbReference>
<dbReference type="PANTHER" id="PTHR11693:SF22">
    <property type="entry name" value="ATP SYNTHASE SUBUNIT GAMMA, MITOCHONDRIAL"/>
    <property type="match status" value="1"/>
</dbReference>
<dbReference type="Pfam" id="PF00231">
    <property type="entry name" value="ATP-synt"/>
    <property type="match status" value="1"/>
</dbReference>
<dbReference type="PRINTS" id="PR00126">
    <property type="entry name" value="ATPASEGAMMA"/>
</dbReference>
<dbReference type="SUPFAM" id="SSF52943">
    <property type="entry name" value="ATP synthase (F1-ATPase), gamma subunit"/>
    <property type="match status" value="1"/>
</dbReference>
<dbReference type="PROSITE" id="PS00153">
    <property type="entry name" value="ATPASE_GAMMA"/>
    <property type="match status" value="1"/>
</dbReference>
<protein>
    <recommendedName>
        <fullName evidence="1">ATP synthase gamma chain</fullName>
    </recommendedName>
    <alternativeName>
        <fullName evidence="1">ATP synthase F1 sector gamma subunit</fullName>
    </alternativeName>
    <alternativeName>
        <fullName evidence="1">F-ATPase gamma subunit</fullName>
    </alternativeName>
</protein>
<name>ATPG_YERPP</name>
<keyword id="KW-0066">ATP synthesis</keyword>
<keyword id="KW-0997">Cell inner membrane</keyword>
<keyword id="KW-1003">Cell membrane</keyword>
<keyword id="KW-0139">CF(1)</keyword>
<keyword id="KW-0375">Hydrogen ion transport</keyword>
<keyword id="KW-0406">Ion transport</keyword>
<keyword id="KW-0472">Membrane</keyword>
<keyword id="KW-0813">Transport</keyword>
<gene>
    <name evidence="1" type="primary">atpG</name>
    <name type="ordered locus">YPDSF_3913</name>
</gene>